<proteinExistence type="evidence at protein level"/>
<sequence>MASLGVQLVGYILGLLGLLGTSIAMLLPNWRTSSYVGASIVTAVGFSKGLWMECATHSTGITQCDIYSTLLGLPADIQAAQAMMVTSSAMSSLACIISVVGMRCTVFCQDSRAKDRVAVVGGVFFILGGILGFIPVAWNLHGILRDFYSPLVPDSMKFEIGEALYLGIISALFSLVAGVILCFSCSPQGNRTNYYDGYQAQPLATRSSPRSAQQPKAKSEFNSYSLTGYV</sequence>
<reference key="1">
    <citation type="journal article" date="1998" name="J. Cell Biol.">
        <title>Claudin-1 and -2: novel integral membrane proteins localizing at tight junctions with no sequence similarity to occludin.</title>
        <authorList>
            <person name="Furuse M."/>
            <person name="Fujita K."/>
            <person name="Hiiragi T."/>
            <person name="Fujimoto K."/>
            <person name="Tsukita S."/>
        </authorList>
    </citation>
    <scope>NUCLEOTIDE SEQUENCE [MRNA]</scope>
    <scope>SUBCELLULAR LOCATION</scope>
    <scope>TISSUE SPECIFICITY</scope>
</reference>
<reference key="2">
    <citation type="journal article" date="2005" name="Science">
        <title>The transcriptional landscape of the mammalian genome.</title>
        <authorList>
            <person name="Carninci P."/>
            <person name="Kasukawa T."/>
            <person name="Katayama S."/>
            <person name="Gough J."/>
            <person name="Frith M.C."/>
            <person name="Maeda N."/>
            <person name="Oyama R."/>
            <person name="Ravasi T."/>
            <person name="Lenhard B."/>
            <person name="Wells C."/>
            <person name="Kodzius R."/>
            <person name="Shimokawa K."/>
            <person name="Bajic V.B."/>
            <person name="Brenner S.E."/>
            <person name="Batalov S."/>
            <person name="Forrest A.R."/>
            <person name="Zavolan M."/>
            <person name="Davis M.J."/>
            <person name="Wilming L.G."/>
            <person name="Aidinis V."/>
            <person name="Allen J.E."/>
            <person name="Ambesi-Impiombato A."/>
            <person name="Apweiler R."/>
            <person name="Aturaliya R.N."/>
            <person name="Bailey T.L."/>
            <person name="Bansal M."/>
            <person name="Baxter L."/>
            <person name="Beisel K.W."/>
            <person name="Bersano T."/>
            <person name="Bono H."/>
            <person name="Chalk A.M."/>
            <person name="Chiu K.P."/>
            <person name="Choudhary V."/>
            <person name="Christoffels A."/>
            <person name="Clutterbuck D.R."/>
            <person name="Crowe M.L."/>
            <person name="Dalla E."/>
            <person name="Dalrymple B.P."/>
            <person name="de Bono B."/>
            <person name="Della Gatta G."/>
            <person name="di Bernardo D."/>
            <person name="Down T."/>
            <person name="Engstrom P."/>
            <person name="Fagiolini M."/>
            <person name="Faulkner G."/>
            <person name="Fletcher C.F."/>
            <person name="Fukushima T."/>
            <person name="Furuno M."/>
            <person name="Futaki S."/>
            <person name="Gariboldi M."/>
            <person name="Georgii-Hemming P."/>
            <person name="Gingeras T.R."/>
            <person name="Gojobori T."/>
            <person name="Green R.E."/>
            <person name="Gustincich S."/>
            <person name="Harbers M."/>
            <person name="Hayashi Y."/>
            <person name="Hensch T.K."/>
            <person name="Hirokawa N."/>
            <person name="Hill D."/>
            <person name="Huminiecki L."/>
            <person name="Iacono M."/>
            <person name="Ikeo K."/>
            <person name="Iwama A."/>
            <person name="Ishikawa T."/>
            <person name="Jakt M."/>
            <person name="Kanapin A."/>
            <person name="Katoh M."/>
            <person name="Kawasawa Y."/>
            <person name="Kelso J."/>
            <person name="Kitamura H."/>
            <person name="Kitano H."/>
            <person name="Kollias G."/>
            <person name="Krishnan S.P."/>
            <person name="Kruger A."/>
            <person name="Kummerfeld S.K."/>
            <person name="Kurochkin I.V."/>
            <person name="Lareau L.F."/>
            <person name="Lazarevic D."/>
            <person name="Lipovich L."/>
            <person name="Liu J."/>
            <person name="Liuni S."/>
            <person name="McWilliam S."/>
            <person name="Madan Babu M."/>
            <person name="Madera M."/>
            <person name="Marchionni L."/>
            <person name="Matsuda H."/>
            <person name="Matsuzawa S."/>
            <person name="Miki H."/>
            <person name="Mignone F."/>
            <person name="Miyake S."/>
            <person name="Morris K."/>
            <person name="Mottagui-Tabar S."/>
            <person name="Mulder N."/>
            <person name="Nakano N."/>
            <person name="Nakauchi H."/>
            <person name="Ng P."/>
            <person name="Nilsson R."/>
            <person name="Nishiguchi S."/>
            <person name="Nishikawa S."/>
            <person name="Nori F."/>
            <person name="Ohara O."/>
            <person name="Okazaki Y."/>
            <person name="Orlando V."/>
            <person name="Pang K.C."/>
            <person name="Pavan W.J."/>
            <person name="Pavesi G."/>
            <person name="Pesole G."/>
            <person name="Petrovsky N."/>
            <person name="Piazza S."/>
            <person name="Reed J."/>
            <person name="Reid J.F."/>
            <person name="Ring B.Z."/>
            <person name="Ringwald M."/>
            <person name="Rost B."/>
            <person name="Ruan Y."/>
            <person name="Salzberg S.L."/>
            <person name="Sandelin A."/>
            <person name="Schneider C."/>
            <person name="Schoenbach C."/>
            <person name="Sekiguchi K."/>
            <person name="Semple C.A."/>
            <person name="Seno S."/>
            <person name="Sessa L."/>
            <person name="Sheng Y."/>
            <person name="Shibata Y."/>
            <person name="Shimada H."/>
            <person name="Shimada K."/>
            <person name="Silva D."/>
            <person name="Sinclair B."/>
            <person name="Sperling S."/>
            <person name="Stupka E."/>
            <person name="Sugiura K."/>
            <person name="Sultana R."/>
            <person name="Takenaka Y."/>
            <person name="Taki K."/>
            <person name="Tammoja K."/>
            <person name="Tan S.L."/>
            <person name="Tang S."/>
            <person name="Taylor M.S."/>
            <person name="Tegner J."/>
            <person name="Teichmann S.A."/>
            <person name="Ueda H.R."/>
            <person name="van Nimwegen E."/>
            <person name="Verardo R."/>
            <person name="Wei C.L."/>
            <person name="Yagi K."/>
            <person name="Yamanishi H."/>
            <person name="Zabarovsky E."/>
            <person name="Zhu S."/>
            <person name="Zimmer A."/>
            <person name="Hide W."/>
            <person name="Bult C."/>
            <person name="Grimmond S.M."/>
            <person name="Teasdale R.D."/>
            <person name="Liu E.T."/>
            <person name="Brusic V."/>
            <person name="Quackenbush J."/>
            <person name="Wahlestedt C."/>
            <person name="Mattick J.S."/>
            <person name="Hume D.A."/>
            <person name="Kai C."/>
            <person name="Sasaki D."/>
            <person name="Tomaru Y."/>
            <person name="Fukuda S."/>
            <person name="Kanamori-Katayama M."/>
            <person name="Suzuki M."/>
            <person name="Aoki J."/>
            <person name="Arakawa T."/>
            <person name="Iida J."/>
            <person name="Imamura K."/>
            <person name="Itoh M."/>
            <person name="Kato T."/>
            <person name="Kawaji H."/>
            <person name="Kawagashira N."/>
            <person name="Kawashima T."/>
            <person name="Kojima M."/>
            <person name="Kondo S."/>
            <person name="Konno H."/>
            <person name="Nakano K."/>
            <person name="Ninomiya N."/>
            <person name="Nishio T."/>
            <person name="Okada M."/>
            <person name="Plessy C."/>
            <person name="Shibata K."/>
            <person name="Shiraki T."/>
            <person name="Suzuki S."/>
            <person name="Tagami M."/>
            <person name="Waki K."/>
            <person name="Watahiki A."/>
            <person name="Okamura-Oho Y."/>
            <person name="Suzuki H."/>
            <person name="Kawai J."/>
            <person name="Hayashizaki Y."/>
        </authorList>
    </citation>
    <scope>NUCLEOTIDE SEQUENCE [LARGE SCALE MRNA]</scope>
    <source>
        <strain>C57BL/6J</strain>
        <tissue>Liver</tissue>
    </source>
</reference>
<reference key="3">
    <citation type="journal article" date="2004" name="Genome Res.">
        <title>The status, quality, and expansion of the NIH full-length cDNA project: the Mammalian Gene Collection (MGC).</title>
        <authorList>
            <consortium name="The MGC Project Team"/>
        </authorList>
    </citation>
    <scope>NUCLEOTIDE SEQUENCE [LARGE SCALE MRNA]</scope>
    <source>
        <strain>C57BL/6J</strain>
        <strain>FVB/N</strain>
        <tissue>Brain</tissue>
        <tissue>Kidney</tissue>
    </source>
</reference>
<reference key="4">
    <citation type="journal article" date="1999" name="Curr. Biol.">
        <title>Ca(2+)-independent cell-adhesion activity of claudins, a family of integral membrane proteins localized at tight junctions.</title>
        <authorList>
            <person name="Kubota K."/>
            <person name="Furuse M."/>
            <person name="Sasaki H."/>
            <person name="Sonoda N."/>
            <person name="Fujita K."/>
            <person name="Nagafuchi A."/>
            <person name="Tsukita S."/>
        </authorList>
    </citation>
    <scope>FUNCTION</scope>
</reference>
<reference key="5">
    <citation type="journal article" date="1999" name="J. Cell Biol.">
        <title>Manner of interaction of heterogeneous claudin species within and between tight junction strands.</title>
        <authorList>
            <person name="Furuse M."/>
            <person name="Sasaki H."/>
            <person name="Tsukita S."/>
        </authorList>
    </citation>
    <scope>INTERACTION WITH CLDN1 AND CLDN3</scope>
</reference>
<reference key="6">
    <citation type="journal article" date="1999" name="J. Cell Biol.">
        <title>Direct binding of three tight junction-associated MAGUKs, ZO-1, ZO-2, and ZO-3, with the COOH termini of claudins.</title>
        <authorList>
            <person name="Itoh M."/>
            <person name="Furuse M."/>
            <person name="Morita K."/>
            <person name="Kubota K."/>
            <person name="Saitou M."/>
            <person name="Tsukita S."/>
        </authorList>
    </citation>
    <scope>INTERACTION WITH TJP1; TJP2 AND TJP3</scope>
</reference>
<reference key="7">
    <citation type="journal article" date="2002" name="J. Biol. Chem.">
        <title>Cloning of the human claudin-2 5'-flanking region revealed a TATA-less promoter with conserved binding sites in mouse and human for caudal-related homeodomain proteins and hepatocyte nuclear factor-1alpha.</title>
        <authorList>
            <person name="Sakaguchi T."/>
            <person name="Gu X."/>
            <person name="Golden H.M."/>
            <person name="Suh E."/>
            <person name="Rhoads D.B."/>
            <person name="Reinecker H.-C."/>
        </authorList>
    </citation>
    <scope>SUBCELLULAR LOCATION</scope>
    <scope>TISSUE SPECIFICITY</scope>
    <scope>INDUCTION</scope>
</reference>
<reference key="8">
    <citation type="journal article" date="2002" name="J. Cell Sci.">
        <title>Claudin-2 expression induces cation-selective channels in tight junctions of epithelial cells.</title>
        <authorList>
            <person name="Amasheh S."/>
            <person name="Meiri N."/>
            <person name="Gitter A.H."/>
            <person name="Schoeneberg T."/>
            <person name="Mankertz J."/>
            <person name="Schulzke J.D."/>
            <person name="Fromm M."/>
        </authorList>
    </citation>
    <scope>FUNCTION</scope>
    <scope>TRANSPORTER ACTIVITY</scope>
    <scope>SUBCELLULAR LOCATION</scope>
</reference>
<reference key="9">
    <citation type="journal article" date="2009" name="J. Gen. Physiol.">
        <title>Molecular basis for cation selectivity in claudin-2-based paracellular pores: identification of an electrostatic interaction site.</title>
        <authorList>
            <person name="Yu A.S."/>
            <person name="Cheng M.H."/>
            <person name="Angelow S."/>
            <person name="Guenzel D."/>
            <person name="Kanzawa S.A."/>
            <person name="Schneeberger E.E."/>
            <person name="Fromm M."/>
            <person name="Coalson R.D."/>
        </authorList>
    </citation>
    <scope>FUNCTION</scope>
    <scope>TRANSPORTER ACTIVITY</scope>
    <scope>ACTIVITY REGULATION</scope>
    <scope>SITE</scope>
    <scope>MUTAGENESIS OF GLU-53; ASP-65 AND ASP-76</scope>
</reference>
<reference key="10">
    <citation type="journal article" date="2010" name="Cell">
        <title>A tissue-specific atlas of mouse protein phosphorylation and expression.</title>
        <authorList>
            <person name="Huttlin E.L."/>
            <person name="Jedrychowski M.P."/>
            <person name="Elias J.E."/>
            <person name="Goswami T."/>
            <person name="Rad R."/>
            <person name="Beausoleil S.A."/>
            <person name="Villen J."/>
            <person name="Haas W."/>
            <person name="Sowa M.E."/>
            <person name="Gygi S.P."/>
        </authorList>
    </citation>
    <scope>PHOSPHORYLATION [LARGE SCALE ANALYSIS] AT SER-219 AND SER-223</scope>
    <scope>IDENTIFICATION BY MASS SPECTROMETRY [LARGE SCALE ANALYSIS]</scope>
    <source>
        <tissue>Kidney</tissue>
        <tissue>Liver</tissue>
    </source>
</reference>
<reference key="11">
    <citation type="journal article" date="2013" name="Am. J. Physiol.">
        <title>Claudin-2 pore function requires an intramolecular disulfide bond between two conserved extracellular cysteines.</title>
        <authorList>
            <person name="Li J."/>
            <person name="Angelow S."/>
            <person name="Linge A."/>
            <person name="Zhuo M."/>
            <person name="Yu A.S."/>
        </authorList>
    </citation>
    <scope>FUNCTION</scope>
    <scope>TRANSPORTER ACTIVITY</scope>
    <scope>SUBCELLULAR LOCATION</scope>
    <scope>SUBUNIT</scope>
    <scope>DISULFIDE BOND</scope>
    <scope>MUTAGENESIS OF CYS-54 AND CYS-64</scope>
</reference>
<reference key="12">
    <citation type="journal article" date="2013" name="Gastroenterology">
        <title>Loss of claudins 2 and 15 from mice causes defects in paracellular Na+ flow and nutrient transport in gut and leads to death from malnutrition.</title>
        <authorList>
            <person name="Wada M."/>
            <person name="Tamura A."/>
            <person name="Takahashi N."/>
            <person name="Tsukita S."/>
        </authorList>
    </citation>
    <scope>FUNCTION</scope>
    <scope>TRANSPORTER ACTIVITY</scope>
    <scope>DISRUPTION PHENOTYPE</scope>
</reference>
<reference key="13">
    <citation type="journal article" date="2014" name="Gastroenterology">
        <title>Claudin 2 deficiency reduces bile flow and increases susceptibility to cholesterol gallstone disease in mice.</title>
        <authorList>
            <person name="Matsumoto K."/>
            <person name="Imasato M."/>
            <person name="Yamazaki Y."/>
            <person name="Tanaka H."/>
            <person name="Watanabe M."/>
            <person name="Eguchi H."/>
            <person name="Nagano H."/>
            <person name="Hikita H."/>
            <person name="Tatsumi T."/>
            <person name="Takehara T."/>
            <person name="Tamura A."/>
            <person name="Tsukita S."/>
        </authorList>
    </citation>
    <scope>FUNCTION</scope>
    <scope>TRANSPORTER ACTIVITY</scope>
    <scope>DISRUPTION PHENOTYPE</scope>
    <scope>TISSUE SPECIFICITY</scope>
</reference>
<reference key="14">
    <citation type="journal article" date="2016" name="J. Clin. Invest.">
        <title>Paracellular epithelial sodium transport maximizes energy efficiency in the kidney.</title>
        <authorList>
            <person name="Pei L."/>
            <person name="Solis G."/>
            <person name="Nguyen M.T."/>
            <person name="Kamat N."/>
            <person name="Magenheimer L."/>
            <person name="Zhuo M."/>
            <person name="Li J."/>
            <person name="Curry J."/>
            <person name="McDonough A.A."/>
            <person name="Fields T.A."/>
            <person name="Welch W.J."/>
            <person name="Yu A.S."/>
        </authorList>
    </citation>
    <scope>FUNCTION</scope>
</reference>
<reference key="15">
    <citation type="journal article" date="2017" name="Cell Host Microbe">
        <title>IL-22 Upregulates Epithelial Claudin-2 to Drive Diarrhea and Enteric Pathogen Clearance.</title>
        <authorList>
            <person name="Tsai P.Y."/>
            <person name="Zhang B."/>
            <person name="He W.Q."/>
            <person name="Zha J.M."/>
            <person name="Odenwald M.A."/>
            <person name="Singh G."/>
            <person name="Tamura A."/>
            <person name="Shen L."/>
            <person name="Sailer A."/>
            <person name="Yeruva S."/>
            <person name="Kuo W.T."/>
            <person name="Fu Y.X."/>
            <person name="Tsukita S."/>
            <person name="Turner J.R."/>
        </authorList>
    </citation>
    <scope>FUNCTION</scope>
    <scope>TRANSPORTER ACTIVITY</scope>
    <scope>INDUCTION BY IL22</scope>
    <scope>TISSUE SPECIFICITY</scope>
    <scope>DISRUPTION PHENOTYPE</scope>
</reference>
<reference key="16">
    <citation type="journal article" date="2020" name="J. Clin. Invest.">
        <title>Claudin-2 deficiency associates with hypercalciuria in mice and human kidney stone disease.</title>
        <authorList>
            <person name="Curry J.N."/>
            <person name="Saurette M."/>
            <person name="Askari M."/>
            <person name="Pei L."/>
            <person name="Filla M.B."/>
            <person name="Beggs M.R."/>
            <person name="Rowe P.S."/>
            <person name="Fields T."/>
            <person name="Sommer A.J."/>
            <person name="Tanikawa C."/>
            <person name="Kamatani Y."/>
            <person name="Evan A.P."/>
            <person name="Totonchi M."/>
            <person name="Alexander R.T."/>
            <person name="Matsuda K."/>
            <person name="Yu A.S."/>
        </authorList>
    </citation>
    <scope>DISRUPTION PHENOTYPE</scope>
    <scope>FUNCTION</scope>
    <scope>TRANSPORTER ACTIVITY</scope>
    <scope>SUBCELLULAR LOCATION</scope>
</reference>
<organism>
    <name type="scientific">Mus musculus</name>
    <name type="common">Mouse</name>
    <dbReference type="NCBI Taxonomy" id="10090"/>
    <lineage>
        <taxon>Eukaryota</taxon>
        <taxon>Metazoa</taxon>
        <taxon>Chordata</taxon>
        <taxon>Craniata</taxon>
        <taxon>Vertebrata</taxon>
        <taxon>Euteleostomi</taxon>
        <taxon>Mammalia</taxon>
        <taxon>Eutheria</taxon>
        <taxon>Euarchontoglires</taxon>
        <taxon>Glires</taxon>
        <taxon>Rodentia</taxon>
        <taxon>Myomorpha</taxon>
        <taxon>Muroidea</taxon>
        <taxon>Muridae</taxon>
        <taxon>Murinae</taxon>
        <taxon>Mus</taxon>
        <taxon>Mus</taxon>
    </lineage>
</organism>
<evidence type="ECO:0000250" key="1"/>
<evidence type="ECO:0000255" key="2"/>
<evidence type="ECO:0000256" key="3">
    <source>
        <dbReference type="SAM" id="MobiDB-lite"/>
    </source>
</evidence>
<evidence type="ECO:0000269" key="4">
    <source>
    </source>
</evidence>
<evidence type="ECO:0000269" key="5">
    <source>
    </source>
</evidence>
<evidence type="ECO:0000269" key="6">
    <source>
    </source>
</evidence>
<evidence type="ECO:0000269" key="7">
    <source>
    </source>
</evidence>
<evidence type="ECO:0000269" key="8">
    <source>
    </source>
</evidence>
<evidence type="ECO:0000269" key="9">
    <source>
    </source>
</evidence>
<evidence type="ECO:0000269" key="10">
    <source>
    </source>
</evidence>
<evidence type="ECO:0000269" key="11">
    <source>
    </source>
</evidence>
<evidence type="ECO:0000269" key="12">
    <source>
    </source>
</evidence>
<evidence type="ECO:0000269" key="13">
    <source>
    </source>
</evidence>
<evidence type="ECO:0000269" key="14">
    <source>
    </source>
</evidence>
<evidence type="ECO:0000269" key="15">
    <source>
    </source>
</evidence>
<evidence type="ECO:0000269" key="16">
    <source>
    </source>
</evidence>
<evidence type="ECO:0000303" key="17">
    <source>
    </source>
</evidence>
<evidence type="ECO:0000303" key="18">
    <source>
    </source>
</evidence>
<evidence type="ECO:0000305" key="19"/>
<evidence type="ECO:0000305" key="20">
    <source>
    </source>
</evidence>
<evidence type="ECO:0000305" key="21">
    <source>
    </source>
</evidence>
<evidence type="ECO:0000305" key="22">
    <source>
    </source>
</evidence>
<evidence type="ECO:0000305" key="23">
    <source>
    </source>
</evidence>
<evidence type="ECO:0000312" key="24">
    <source>
        <dbReference type="MGI" id="MGI:1276110"/>
    </source>
</evidence>
<evidence type="ECO:0007744" key="25">
    <source>
    </source>
</evidence>
<evidence type="ECO:0007829" key="26">
    <source>
        <dbReference type="PDB" id="4P5H"/>
    </source>
</evidence>
<gene>
    <name evidence="18 24" type="primary">Cldn2</name>
</gene>
<comment type="function">
    <text evidence="4 8 9 10 11 12 13 14 15">Forms paracellular channels: polymerizes in tight junction strands with cation- and water-selective channels through the strands, conveying epithelial permeability in a process known as paracellular tight junction permeability (PubMed:10508613, PubMed:12432083, PubMed:19114638, PubMed:23677799). In intestinal epithelium, allows for sodium and water fluxes from the peritoneal side to the lumen of the intestine to regulate nutrient absorption and clear enteric pathogens as part of mucosal immune response (PubMed:23089202, PubMed:28618266). In kidney, allows passive sodium and calcium reabsorption across proximal tubules from the lumen back to the bloodstream (PubMed:27214555, PubMed:32149733). In the hepatobiliary tract, allows paracellular water and cation fluxes in the hepatic perivenous areas and biliary epithelium to generate bile flow and maintain osmotic gradients (PubMed:25068494).</text>
</comment>
<comment type="catalytic activity">
    <reaction evidence="8 9 11 20 21 22 23">
        <text>Na(+)(in) = Na(+)(out)</text>
        <dbReference type="Rhea" id="RHEA:34963"/>
        <dbReference type="ChEBI" id="CHEBI:29101"/>
    </reaction>
</comment>
<comment type="catalytic activity">
    <reaction evidence="8 9">
        <text>K(+)(in) = K(+)(out)</text>
        <dbReference type="Rhea" id="RHEA:29463"/>
        <dbReference type="ChEBI" id="CHEBI:29103"/>
    </reaction>
</comment>
<comment type="catalytic activity">
    <reaction evidence="9">
        <text>Rb(+)(in) = Rb(+)(out)</text>
        <dbReference type="Rhea" id="RHEA:78547"/>
        <dbReference type="ChEBI" id="CHEBI:49847"/>
    </reaction>
</comment>
<comment type="catalytic activity">
    <reaction evidence="9">
        <text>Li(+)(in) = Li(+)(out)</text>
        <dbReference type="Rhea" id="RHEA:78551"/>
        <dbReference type="ChEBI" id="CHEBI:49713"/>
    </reaction>
</comment>
<comment type="catalytic activity">
    <reaction evidence="9">
        <text>Cs(+)(in) = Cs(+)(out)</text>
        <dbReference type="Rhea" id="RHEA:78555"/>
        <dbReference type="ChEBI" id="CHEBI:49547"/>
    </reaction>
</comment>
<comment type="catalytic activity">
    <reaction evidence="9 23">
        <text>Ca(2+)(in) = Ca(2+)(out)</text>
        <dbReference type="Rhea" id="RHEA:29671"/>
        <dbReference type="ChEBI" id="CHEBI:29108"/>
    </reaction>
</comment>
<comment type="catalytic activity">
    <reaction evidence="9">
        <text>methylamine(out) = methylamine(in)</text>
        <dbReference type="Rhea" id="RHEA:74391"/>
        <dbReference type="ChEBI" id="CHEBI:59338"/>
    </reaction>
</comment>
<comment type="catalytic activity">
    <reaction evidence="8">
        <text>choline(out) = choline(in)</text>
        <dbReference type="Rhea" id="RHEA:32751"/>
        <dbReference type="ChEBI" id="CHEBI:15354"/>
    </reaction>
</comment>
<comment type="catalytic activity">
    <reaction evidence="21 22">
        <text>H2O(in) = H2O(out)</text>
        <dbReference type="Rhea" id="RHEA:29667"/>
        <dbReference type="ChEBI" id="CHEBI:15377"/>
    </reaction>
</comment>
<comment type="activity regulation">
    <text evidence="9">The channel permeability is down-regulated at acidic pH.</text>
</comment>
<comment type="subunit">
    <text evidence="5 6 11">Can form homo- and heteropolymers with other claudins to mediate paracellular barrier and channel functions of tight junctions in response to physiological stimuli. Homopolymers interact with CLDN3, but not CLDN1, homopolymers. Directly interacts with TJP1/ZO-1, TJP2/ZO-2 and TJP3/ZO-3.</text>
</comment>
<comment type="subcellular location">
    <subcellularLocation>
        <location evidence="7 8 11 15 16">Cell junction</location>
        <location evidence="7 8 11 15 16">Tight junction</location>
    </subcellularLocation>
    <subcellularLocation>
        <location evidence="7">Cell membrane</location>
        <topology evidence="2">Multi-pass membrane protein</topology>
    </subcellularLocation>
</comment>
<comment type="tissue specificity">
    <text evidence="7 12 14 16">Expressed in the kidney, liver and intestine, with higher levels in the ileum than in the jejunum. Low levels in the brain (PubMed:11934881, PubMed:9647647). Expressed in colonic epithelium (at protein level) (PubMed:28618266). Expressed in the perivenous regions, bile ducts, and gallbladder epithelium (at protein level) (PubMed:25068494).</text>
</comment>
<comment type="induction">
    <text evidence="7 14">Induced by IL22 upon C.rodentium infection (PubMed:28618266). By CDX1 and CDX2. Induction by CDX2, but not CDX1, is potentiated by TCF1.</text>
</comment>
<comment type="PTM">
    <text evidence="11">The disulfide bond is necessary for pore formation, but is not required for correct protein trafficking.</text>
</comment>
<comment type="disruption phenotype">
    <text evidence="10 12 14 15">Both female and male Cldn2-knockout mice are similarly hypercalciuric compared to wild-type littermates. Cldn2-null mice are hypercalciuric due to a primary defect in renal tubule calcium transport and develop papillary nephrocalcinosis. Cldn2-null mice are also found to have increased net intestinal calcium absorption, but reduced paracellular calcium permeability in the colon, suggesting reduced intestinal calcium secretion (PubMed:32149733). Cldn2-knockout mice have decreased bile flow and show increased susceptibility to cholesterol gallstone formation (PubMed:25068494). Additionally, Cldn2-knockout mice display impaired C.rodentium clearance and are prone to severe infectious enterocolitis (PubMed:28618266). Double Cldn2- and Cldn15-knockout mice show profound growth retardation and died by postnatal day 25 due to intestinal malabsorption (PubMed:23089202).</text>
</comment>
<comment type="similarity">
    <text evidence="19">Belongs to the claudin family.</text>
</comment>
<name>CLD2_MOUSE</name>
<protein>
    <recommendedName>
        <fullName evidence="17">Claudin-2</fullName>
    </recommendedName>
</protein>
<accession>O88552</accession>
<feature type="chain" id="PRO_0000144735" description="Claudin-2">
    <location>
        <begin position="1"/>
        <end position="230"/>
    </location>
</feature>
<feature type="topological domain" description="Cytoplasmic" evidence="2">
    <location>
        <begin position="1"/>
        <end position="7"/>
    </location>
</feature>
<feature type="transmembrane region" description="Helical" evidence="2">
    <location>
        <begin position="8"/>
        <end position="28"/>
    </location>
</feature>
<feature type="topological domain" description="Extracellular" evidence="2">
    <location>
        <begin position="29"/>
        <end position="81"/>
    </location>
</feature>
<feature type="transmembrane region" description="Helical" evidence="2">
    <location>
        <begin position="82"/>
        <end position="102"/>
    </location>
</feature>
<feature type="topological domain" description="Cytoplasmic" evidence="2">
    <location>
        <begin position="103"/>
        <end position="116"/>
    </location>
</feature>
<feature type="transmembrane region" description="Helical" evidence="2">
    <location>
        <begin position="117"/>
        <end position="137"/>
    </location>
</feature>
<feature type="topological domain" description="Extracellular" evidence="2">
    <location>
        <begin position="138"/>
        <end position="162"/>
    </location>
</feature>
<feature type="transmembrane region" description="Helical" evidence="2">
    <location>
        <begin position="163"/>
        <end position="183"/>
    </location>
</feature>
<feature type="topological domain" description="Cytoplasmic" evidence="2">
    <location>
        <begin position="184"/>
        <end position="230"/>
    </location>
</feature>
<feature type="region of interest" description="Disordered" evidence="3">
    <location>
        <begin position="205"/>
        <end position="230"/>
    </location>
</feature>
<feature type="region of interest" description="Interactions with TJP1, TJP2 and TJP3" evidence="1">
    <location>
        <begin position="229"/>
        <end position="230"/>
    </location>
</feature>
<feature type="site" description="Paracellular cation selectivity" evidence="9">
    <location>
        <position position="65"/>
    </location>
</feature>
<feature type="modified residue" description="Phosphoserine" evidence="25">
    <location>
        <position position="219"/>
    </location>
</feature>
<feature type="modified residue" description="Phosphoserine" evidence="25">
    <location>
        <position position="223"/>
    </location>
</feature>
<feature type="disulfide bond" evidence="11">
    <location>
        <begin position="54"/>
        <end position="64"/>
    </location>
</feature>
<feature type="cross-link" description="Glycyl lysine isopeptide (Lys-Gly) (interchain with G-Cter in SUMO)" evidence="1">
    <location>
        <position position="218"/>
    </location>
</feature>
<feature type="mutagenesis site" description="Does not affect the channel activity." evidence="9">
    <original>E</original>
    <variation>Q</variation>
    <location>
        <position position="53"/>
    </location>
</feature>
<feature type="mutagenesis site" description="Disrupts trafficking to tight junction." evidence="11">
    <original>C</original>
    <variation>A</variation>
    <location>
        <position position="54"/>
    </location>
</feature>
<feature type="mutagenesis site" description="Does not affect trafficking to tight junction. Causes loss of pore formation. Impairs transepithelial conductance. Impairs sodium paracellular permeability." evidence="11">
    <original>C</original>
    <variation>S</variation>
    <location>
        <position position="54"/>
    </location>
</feature>
<feature type="mutagenesis site" description="Disrupts trafficking to tight junction." evidence="11">
    <original>C</original>
    <variation>A</variation>
    <location>
        <position position="64"/>
    </location>
</feature>
<feature type="mutagenesis site" description="Does not affect trafficking to tight junction. Causes loss of pore formation. Impairs transepithelial conductance. Impairs sodium paracellular permeability." evidence="11">
    <original>C</original>
    <variation>S</variation>
    <location>
        <position position="64"/>
    </location>
</feature>
<feature type="mutagenesis site" description="Markedly decreases cation permeability." evidence="9">
    <original>D</original>
    <variation>N</variation>
    <location>
        <position position="65"/>
    </location>
</feature>
<feature type="mutagenesis site" description="Does not affect the channel activity." evidence="9">
    <original>D</original>
    <variation>N</variation>
    <location>
        <position position="76"/>
    </location>
</feature>
<feature type="strand" evidence="26">
    <location>
        <begin position="152"/>
        <end position="154"/>
    </location>
</feature>
<keyword id="KW-0002">3D-structure</keyword>
<keyword id="KW-0965">Cell junction</keyword>
<keyword id="KW-1003">Cell membrane</keyword>
<keyword id="KW-1015">Disulfide bond</keyword>
<keyword id="KW-1017">Isopeptide bond</keyword>
<keyword id="KW-0472">Membrane</keyword>
<keyword id="KW-0597">Phosphoprotein</keyword>
<keyword id="KW-1185">Reference proteome</keyword>
<keyword id="KW-0796">Tight junction</keyword>
<keyword id="KW-0812">Transmembrane</keyword>
<keyword id="KW-1133">Transmembrane helix</keyword>
<keyword id="KW-0832">Ubl conjugation</keyword>
<dbReference type="EMBL" id="AF072128">
    <property type="protein sequence ID" value="AAC27079.1"/>
    <property type="molecule type" value="mRNA"/>
</dbReference>
<dbReference type="EMBL" id="AK004990">
    <property type="protein sequence ID" value="BAB23725.1"/>
    <property type="molecule type" value="mRNA"/>
</dbReference>
<dbReference type="EMBL" id="BC015252">
    <property type="protein sequence ID" value="AAH15252.1"/>
    <property type="molecule type" value="mRNA"/>
</dbReference>
<dbReference type="EMBL" id="BC085494">
    <property type="protein sequence ID" value="AAH85494.1"/>
    <property type="molecule type" value="mRNA"/>
</dbReference>
<dbReference type="CCDS" id="CCDS30437.1"/>
<dbReference type="RefSeq" id="NP_001397350.1">
    <property type="nucleotide sequence ID" value="NM_001410421.1"/>
</dbReference>
<dbReference type="RefSeq" id="NP_057884.1">
    <property type="nucleotide sequence ID" value="NM_016675.5"/>
</dbReference>
<dbReference type="RefSeq" id="XP_006528553.1">
    <property type="nucleotide sequence ID" value="XM_006528490.3"/>
</dbReference>
<dbReference type="PDB" id="4P5H">
    <property type="method" value="X-ray"/>
    <property type="resolution" value="3.38 A"/>
    <property type="chains" value="1/2/3/4/P/Q/R/S/T/U/V/W/X/Y/Z=141-160"/>
</dbReference>
<dbReference type="PDBsum" id="4P5H"/>
<dbReference type="SMR" id="O88552"/>
<dbReference type="FunCoup" id="O88552">
    <property type="interactions" value="278"/>
</dbReference>
<dbReference type="MINT" id="O88552"/>
<dbReference type="STRING" id="10090.ENSMUSP00000054219"/>
<dbReference type="TCDB" id="1.H.1.1.11">
    <property type="family name" value="the claudin tight junction (claudin1) family"/>
</dbReference>
<dbReference type="iPTMnet" id="O88552"/>
<dbReference type="PhosphoSitePlus" id="O88552"/>
<dbReference type="SwissPalm" id="O88552"/>
<dbReference type="PaxDb" id="10090-ENSMUSP00000054219"/>
<dbReference type="PeptideAtlas" id="O88552"/>
<dbReference type="ProteomicsDB" id="285489"/>
<dbReference type="Antibodypedia" id="3617">
    <property type="antibodies" value="581 antibodies from 34 providers"/>
</dbReference>
<dbReference type="DNASU" id="12738"/>
<dbReference type="Ensembl" id="ENSMUST00000054889.4">
    <property type="protein sequence ID" value="ENSMUSP00000054219.4"/>
    <property type="gene ID" value="ENSMUSG00000047230.7"/>
</dbReference>
<dbReference type="GeneID" id="12738"/>
<dbReference type="KEGG" id="mmu:12738"/>
<dbReference type="UCSC" id="uc009ukl.2">
    <property type="organism name" value="mouse"/>
</dbReference>
<dbReference type="AGR" id="MGI:1276110"/>
<dbReference type="CTD" id="9075"/>
<dbReference type="MGI" id="MGI:1276110">
    <property type="gene designation" value="Cldn2"/>
</dbReference>
<dbReference type="VEuPathDB" id="HostDB:ENSMUSG00000047230"/>
<dbReference type="eggNOG" id="ENOG502R10A">
    <property type="taxonomic scope" value="Eukaryota"/>
</dbReference>
<dbReference type="GeneTree" id="ENSGT00940000160785"/>
<dbReference type="HOGENOM" id="CLU_076370_1_2_1"/>
<dbReference type="InParanoid" id="O88552"/>
<dbReference type="OMA" id="FIPVVWN"/>
<dbReference type="OrthoDB" id="9446875at2759"/>
<dbReference type="PhylomeDB" id="O88552"/>
<dbReference type="TreeFam" id="TF331936"/>
<dbReference type="BioGRID-ORCS" id="12738">
    <property type="hits" value="3 hits in 79 CRISPR screens"/>
</dbReference>
<dbReference type="ChiTaRS" id="Cldn2">
    <property type="organism name" value="mouse"/>
</dbReference>
<dbReference type="EvolutionaryTrace" id="O88552"/>
<dbReference type="PRO" id="PR:O88552"/>
<dbReference type="Proteomes" id="UP000000589">
    <property type="component" value="Chromosome X"/>
</dbReference>
<dbReference type="RNAct" id="O88552">
    <property type="molecule type" value="protein"/>
</dbReference>
<dbReference type="Bgee" id="ENSMUSG00000047230">
    <property type="expression patterns" value="Expressed in choroid plexus epithelium and 119 other cell types or tissues"/>
</dbReference>
<dbReference type="ExpressionAtlas" id="O88552">
    <property type="expression patterns" value="baseline and differential"/>
</dbReference>
<dbReference type="GO" id="GO:0005923">
    <property type="term" value="C:bicellular tight junction"/>
    <property type="evidence" value="ECO:0000314"/>
    <property type="project" value="UniProtKB"/>
</dbReference>
<dbReference type="GO" id="GO:0016020">
    <property type="term" value="C:membrane"/>
    <property type="evidence" value="ECO:0000303"/>
    <property type="project" value="UniProtKB"/>
</dbReference>
<dbReference type="GO" id="GO:0005654">
    <property type="term" value="C:nucleoplasm"/>
    <property type="evidence" value="ECO:0007669"/>
    <property type="project" value="Ensembl"/>
</dbReference>
<dbReference type="GO" id="GO:0005886">
    <property type="term" value="C:plasma membrane"/>
    <property type="evidence" value="ECO:0007669"/>
    <property type="project" value="UniProtKB-SubCell"/>
</dbReference>
<dbReference type="GO" id="GO:0070160">
    <property type="term" value="C:tight junction"/>
    <property type="evidence" value="ECO:0000314"/>
    <property type="project" value="UniProtKB"/>
</dbReference>
<dbReference type="GO" id="GO:0042802">
    <property type="term" value="F:identical protein binding"/>
    <property type="evidence" value="ECO:0000353"/>
    <property type="project" value="UniProtKB"/>
</dbReference>
<dbReference type="GO" id="GO:0160187">
    <property type="term" value="F:paracellular tight junction channel activity"/>
    <property type="evidence" value="ECO:0000314"/>
    <property type="project" value="UniProtKB"/>
</dbReference>
<dbReference type="GO" id="GO:0005198">
    <property type="term" value="F:structural molecule activity"/>
    <property type="evidence" value="ECO:0007669"/>
    <property type="project" value="InterPro"/>
</dbReference>
<dbReference type="GO" id="GO:0016338">
    <property type="term" value="P:calcium-independent cell-cell adhesion via plasma membrane cell-adhesion molecules"/>
    <property type="evidence" value="ECO:0000314"/>
    <property type="project" value="UniProtKB"/>
</dbReference>
<dbReference type="GO" id="GO:0098609">
    <property type="term" value="P:cell-cell adhesion"/>
    <property type="evidence" value="ECO:0000315"/>
    <property type="project" value="UniProtKB"/>
</dbReference>
<dbReference type="GO" id="GO:0002227">
    <property type="term" value="P:innate immune response in mucosa"/>
    <property type="evidence" value="ECO:0000315"/>
    <property type="project" value="UniProtKB"/>
</dbReference>
<dbReference type="GO" id="GO:0160184">
    <property type="term" value="P:paracellular transport"/>
    <property type="evidence" value="ECO:0000314"/>
    <property type="project" value="UniProtKB"/>
</dbReference>
<dbReference type="GO" id="GO:0120188">
    <property type="term" value="P:regulation of bile acid secretion"/>
    <property type="evidence" value="ECO:0000315"/>
    <property type="project" value="UniProtKB"/>
</dbReference>
<dbReference type="GO" id="GO:1903985">
    <property type="term" value="P:regulation of intestinal D-glucose absorption"/>
    <property type="evidence" value="ECO:0000315"/>
    <property type="project" value="UniProtKB"/>
</dbReference>
<dbReference type="GO" id="GO:1904729">
    <property type="term" value="P:regulation of intestinal lipid absorption"/>
    <property type="evidence" value="ECO:0000315"/>
    <property type="project" value="UniProtKB"/>
</dbReference>
<dbReference type="FunFam" id="1.20.140.150:FF:000001">
    <property type="entry name" value="Claudin"/>
    <property type="match status" value="1"/>
</dbReference>
<dbReference type="Gene3D" id="1.20.140.150">
    <property type="match status" value="1"/>
</dbReference>
<dbReference type="InterPro" id="IPR006187">
    <property type="entry name" value="Claudin"/>
</dbReference>
<dbReference type="InterPro" id="IPR005411">
    <property type="entry name" value="Claudin2"/>
</dbReference>
<dbReference type="InterPro" id="IPR017974">
    <property type="entry name" value="Claudin_CS"/>
</dbReference>
<dbReference type="InterPro" id="IPR004031">
    <property type="entry name" value="PMP22/EMP/MP20/Claudin"/>
</dbReference>
<dbReference type="PANTHER" id="PTHR12002">
    <property type="entry name" value="CLAUDIN"/>
    <property type="match status" value="1"/>
</dbReference>
<dbReference type="Pfam" id="PF00822">
    <property type="entry name" value="PMP22_Claudin"/>
    <property type="match status" value="1"/>
</dbReference>
<dbReference type="PRINTS" id="PR01077">
    <property type="entry name" value="CLAUDIN"/>
</dbReference>
<dbReference type="PRINTS" id="PR01589">
    <property type="entry name" value="CLAUDIN2"/>
</dbReference>
<dbReference type="PROSITE" id="PS01346">
    <property type="entry name" value="CLAUDIN"/>
    <property type="match status" value="1"/>
</dbReference>